<sequence length="118" mass="13521">MARVKRGVQANRRHKKILKRAKGYYGARSRVYRVAVQAVTKAGQYAYRDRRNKKRTFRRLWIARINAGARLNGLSYSRFINGMKKANIAIDRRVLADIAMHDAATFTALVEKAKAELA</sequence>
<reference key="1">
    <citation type="submission" date="2006-03" db="EMBL/GenBank/DDBJ databases">
        <title>Complete sequence of chromosome of Psychrobacter cryohalolentis K5.</title>
        <authorList>
            <consortium name="US DOE Joint Genome Institute"/>
            <person name="Copeland A."/>
            <person name="Lucas S."/>
            <person name="Lapidus A."/>
            <person name="Barry K."/>
            <person name="Detter J.C."/>
            <person name="Glavina T."/>
            <person name="Hammon N."/>
            <person name="Israni S."/>
            <person name="Dalin E."/>
            <person name="Tice H."/>
            <person name="Pitluck S."/>
            <person name="Brettin T."/>
            <person name="Bruce D."/>
            <person name="Han C."/>
            <person name="Tapia R."/>
            <person name="Sims D.R."/>
            <person name="Gilna P."/>
            <person name="Schmutz J."/>
            <person name="Larimer F."/>
            <person name="Land M."/>
            <person name="Hauser L."/>
            <person name="Kyrpides N."/>
            <person name="Kim E."/>
            <person name="Richardson P."/>
        </authorList>
    </citation>
    <scope>NUCLEOTIDE SEQUENCE [LARGE SCALE GENOMIC DNA]</scope>
    <source>
        <strain>ATCC BAA-1226 / DSM 17306 / VKM B-2378 / K5</strain>
    </source>
</reference>
<keyword id="KW-0687">Ribonucleoprotein</keyword>
<keyword id="KW-0689">Ribosomal protein</keyword>
<keyword id="KW-0694">RNA-binding</keyword>
<keyword id="KW-0699">rRNA-binding</keyword>
<comment type="function">
    <text evidence="1">Binds directly to 23S ribosomal RNA and is necessary for the in vitro assembly process of the 50S ribosomal subunit. It is not involved in the protein synthesizing functions of that subunit.</text>
</comment>
<comment type="similarity">
    <text evidence="1">Belongs to the bacterial ribosomal protein bL20 family.</text>
</comment>
<evidence type="ECO:0000255" key="1">
    <source>
        <dbReference type="HAMAP-Rule" id="MF_00382"/>
    </source>
</evidence>
<evidence type="ECO:0000305" key="2"/>
<organism>
    <name type="scientific">Psychrobacter cryohalolentis (strain ATCC BAA-1226 / DSM 17306 / VKM B-2378 / K5)</name>
    <dbReference type="NCBI Taxonomy" id="335284"/>
    <lineage>
        <taxon>Bacteria</taxon>
        <taxon>Pseudomonadati</taxon>
        <taxon>Pseudomonadota</taxon>
        <taxon>Gammaproteobacteria</taxon>
        <taxon>Moraxellales</taxon>
        <taxon>Moraxellaceae</taxon>
        <taxon>Psychrobacter</taxon>
    </lineage>
</organism>
<feature type="chain" id="PRO_0000243720" description="Large ribosomal subunit protein bL20">
    <location>
        <begin position="1"/>
        <end position="118"/>
    </location>
</feature>
<dbReference type="EMBL" id="CP000323">
    <property type="protein sequence ID" value="ABE76077.1"/>
    <property type="molecule type" value="Genomic_DNA"/>
</dbReference>
<dbReference type="RefSeq" id="WP_011281252.1">
    <property type="nucleotide sequence ID" value="NC_007969.1"/>
</dbReference>
<dbReference type="SMR" id="Q1Q8C6"/>
<dbReference type="STRING" id="335284.Pcryo_2300"/>
<dbReference type="KEGG" id="pcr:Pcryo_2300"/>
<dbReference type="eggNOG" id="COG0292">
    <property type="taxonomic scope" value="Bacteria"/>
</dbReference>
<dbReference type="HOGENOM" id="CLU_123265_0_1_6"/>
<dbReference type="Proteomes" id="UP000002425">
    <property type="component" value="Chromosome"/>
</dbReference>
<dbReference type="GO" id="GO:1990904">
    <property type="term" value="C:ribonucleoprotein complex"/>
    <property type="evidence" value="ECO:0007669"/>
    <property type="project" value="UniProtKB-KW"/>
</dbReference>
<dbReference type="GO" id="GO:0005840">
    <property type="term" value="C:ribosome"/>
    <property type="evidence" value="ECO:0007669"/>
    <property type="project" value="UniProtKB-KW"/>
</dbReference>
<dbReference type="GO" id="GO:0019843">
    <property type="term" value="F:rRNA binding"/>
    <property type="evidence" value="ECO:0007669"/>
    <property type="project" value="UniProtKB-UniRule"/>
</dbReference>
<dbReference type="GO" id="GO:0003735">
    <property type="term" value="F:structural constituent of ribosome"/>
    <property type="evidence" value="ECO:0007669"/>
    <property type="project" value="InterPro"/>
</dbReference>
<dbReference type="GO" id="GO:0000027">
    <property type="term" value="P:ribosomal large subunit assembly"/>
    <property type="evidence" value="ECO:0007669"/>
    <property type="project" value="UniProtKB-UniRule"/>
</dbReference>
<dbReference type="GO" id="GO:0006412">
    <property type="term" value="P:translation"/>
    <property type="evidence" value="ECO:0007669"/>
    <property type="project" value="InterPro"/>
</dbReference>
<dbReference type="CDD" id="cd07026">
    <property type="entry name" value="Ribosomal_L20"/>
    <property type="match status" value="1"/>
</dbReference>
<dbReference type="FunFam" id="1.10.1900.20:FF:000001">
    <property type="entry name" value="50S ribosomal protein L20"/>
    <property type="match status" value="1"/>
</dbReference>
<dbReference type="Gene3D" id="6.10.160.10">
    <property type="match status" value="1"/>
</dbReference>
<dbReference type="Gene3D" id="1.10.1900.20">
    <property type="entry name" value="Ribosomal protein L20"/>
    <property type="match status" value="1"/>
</dbReference>
<dbReference type="HAMAP" id="MF_00382">
    <property type="entry name" value="Ribosomal_bL20"/>
    <property type="match status" value="1"/>
</dbReference>
<dbReference type="InterPro" id="IPR005813">
    <property type="entry name" value="Ribosomal_bL20"/>
</dbReference>
<dbReference type="InterPro" id="IPR049946">
    <property type="entry name" value="RIBOSOMAL_L20_CS"/>
</dbReference>
<dbReference type="InterPro" id="IPR035566">
    <property type="entry name" value="Ribosomal_protein_bL20_C"/>
</dbReference>
<dbReference type="NCBIfam" id="TIGR01032">
    <property type="entry name" value="rplT_bact"/>
    <property type="match status" value="1"/>
</dbReference>
<dbReference type="PANTHER" id="PTHR10986">
    <property type="entry name" value="39S RIBOSOMAL PROTEIN L20"/>
    <property type="match status" value="1"/>
</dbReference>
<dbReference type="Pfam" id="PF00453">
    <property type="entry name" value="Ribosomal_L20"/>
    <property type="match status" value="1"/>
</dbReference>
<dbReference type="PRINTS" id="PR00062">
    <property type="entry name" value="RIBOSOMALL20"/>
</dbReference>
<dbReference type="SUPFAM" id="SSF74731">
    <property type="entry name" value="Ribosomal protein L20"/>
    <property type="match status" value="1"/>
</dbReference>
<dbReference type="PROSITE" id="PS00937">
    <property type="entry name" value="RIBOSOMAL_L20"/>
    <property type="match status" value="1"/>
</dbReference>
<accession>Q1Q8C6</accession>
<proteinExistence type="inferred from homology"/>
<protein>
    <recommendedName>
        <fullName evidence="1">Large ribosomal subunit protein bL20</fullName>
    </recommendedName>
    <alternativeName>
        <fullName evidence="2">50S ribosomal protein L20</fullName>
    </alternativeName>
</protein>
<name>RL20_PSYCK</name>
<gene>
    <name evidence="1" type="primary">rplT</name>
    <name type="ordered locus">Pcryo_2300</name>
</gene>